<gene>
    <name type="primary">HBE1</name>
</gene>
<protein>
    <recommendedName>
        <fullName>Hemoglobin subunit epsilon</fullName>
    </recommendedName>
    <alternativeName>
        <fullName>Epsilon-globin</fullName>
    </alternativeName>
    <alternativeName>
        <fullName>Hemoglobin epsilon chain</fullName>
    </alternativeName>
</protein>
<name>HBE_CHISA</name>
<feature type="chain" id="PRO_0000053205" description="Hemoglobin subunit epsilon">
    <location>
        <begin position="1"/>
        <end position="147"/>
    </location>
</feature>
<feature type="domain" description="Globin" evidence="2">
    <location>
        <begin position="3"/>
        <end position="147"/>
    </location>
</feature>
<feature type="binding site" description="distal binding residue" evidence="2">
    <location>
        <position position="64"/>
    </location>
    <ligand>
        <name>heme b</name>
        <dbReference type="ChEBI" id="CHEBI:60344"/>
    </ligand>
    <ligandPart>
        <name>Fe</name>
        <dbReference type="ChEBI" id="CHEBI:18248"/>
    </ligandPart>
</feature>
<feature type="binding site" description="proximal binding residue" evidence="2">
    <location>
        <position position="93"/>
    </location>
    <ligand>
        <name>heme b</name>
        <dbReference type="ChEBI" id="CHEBI:60344"/>
    </ligand>
    <ligandPart>
        <name>Fe</name>
        <dbReference type="ChEBI" id="CHEBI:18248"/>
    </ligandPart>
</feature>
<feature type="modified residue" description="Phosphoserine" evidence="1">
    <location>
        <position position="14"/>
    </location>
</feature>
<feature type="modified residue" description="Phosphoserine" evidence="1">
    <location>
        <position position="51"/>
    </location>
</feature>
<reference key="1">
    <citation type="journal article" date="1993" name="Mol. Phylogenet. Evol.">
        <title>Molecular phylogeny of the New World monkeys (Platyrrhini, primates).</title>
        <authorList>
            <person name="Schneider H."/>
            <person name="Schneider M.P.C."/>
            <person name="Sampaio I."/>
            <person name="Harada M.L."/>
            <person name="Stanhope M.J."/>
            <person name="Czekysbuaj J."/>
            <person name="Goodman M."/>
        </authorList>
    </citation>
    <scope>NUCLEOTIDE SEQUENCE [GENOMIC DNA]</scope>
    <source>
        <tissue>Lymphocyte</tissue>
    </source>
</reference>
<accession>P68025</accession>
<accession>P43350</accession>
<proteinExistence type="evidence at transcript level"/>
<evidence type="ECO:0000250" key="1">
    <source>
        <dbReference type="UniProtKB" id="P02100"/>
    </source>
</evidence>
<evidence type="ECO:0000255" key="2">
    <source>
        <dbReference type="PROSITE-ProRule" id="PRU00238"/>
    </source>
</evidence>
<keyword id="KW-0349">Heme</keyword>
<keyword id="KW-0408">Iron</keyword>
<keyword id="KW-0479">Metal-binding</keyword>
<keyword id="KW-0561">Oxygen transport</keyword>
<keyword id="KW-0597">Phosphoprotein</keyword>
<keyword id="KW-0813">Transport</keyword>
<organism>
    <name type="scientific">Chiropotes satanas</name>
    <name type="common">Brown-bearded saki</name>
    <dbReference type="NCBI Taxonomy" id="9525"/>
    <lineage>
        <taxon>Eukaryota</taxon>
        <taxon>Metazoa</taxon>
        <taxon>Chordata</taxon>
        <taxon>Craniata</taxon>
        <taxon>Vertebrata</taxon>
        <taxon>Euteleostomi</taxon>
        <taxon>Mammalia</taxon>
        <taxon>Eutheria</taxon>
        <taxon>Euarchontoglires</taxon>
        <taxon>Primates</taxon>
        <taxon>Haplorrhini</taxon>
        <taxon>Platyrrhini</taxon>
        <taxon>Pitheciidae</taxon>
        <taxon>Pitheciinae</taxon>
        <taxon>Chiropotes</taxon>
    </lineage>
</organism>
<sequence>MVHFTAEEKAAITSLWGKMNVEEAGGEALGRLLVVYPWTQRFFDNFGNLSSPSAILGNPKVKAHGKKVLTSFGDAIKNMDNLKTTFAKLSELHCDKLHVDPENFRLLGNVMVIILATHFGKEFTPEVQAAWQKLVSAVAIALGHKYH</sequence>
<comment type="function">
    <text>The epsilon chain is a beta-type chain of early mammalian embryonic hemoglobin.</text>
</comment>
<comment type="subunit">
    <text>Heterotetramer of two alpha chains and two epsilon chains in early embryonic hemoglobin Gower-2; two zeta chains and two epsilon chains in early embryonic hemoglobin Gower-1.</text>
</comment>
<comment type="tissue specificity">
    <text>Red blood cells.</text>
</comment>
<comment type="similarity">
    <text evidence="2">Belongs to the globin family.</text>
</comment>
<dbReference type="EMBL" id="L25360">
    <property type="protein sequence ID" value="AAA35441.1"/>
    <property type="molecule type" value="Genomic_DNA"/>
</dbReference>
<dbReference type="SMR" id="P68025"/>
<dbReference type="GO" id="GO:0072562">
    <property type="term" value="C:blood microparticle"/>
    <property type="evidence" value="ECO:0007669"/>
    <property type="project" value="TreeGrafter"/>
</dbReference>
<dbReference type="GO" id="GO:0031838">
    <property type="term" value="C:haptoglobin-hemoglobin complex"/>
    <property type="evidence" value="ECO:0007669"/>
    <property type="project" value="TreeGrafter"/>
</dbReference>
<dbReference type="GO" id="GO:0005833">
    <property type="term" value="C:hemoglobin complex"/>
    <property type="evidence" value="ECO:0007669"/>
    <property type="project" value="InterPro"/>
</dbReference>
<dbReference type="GO" id="GO:0031720">
    <property type="term" value="F:haptoglobin binding"/>
    <property type="evidence" value="ECO:0007669"/>
    <property type="project" value="TreeGrafter"/>
</dbReference>
<dbReference type="GO" id="GO:0020037">
    <property type="term" value="F:heme binding"/>
    <property type="evidence" value="ECO:0007669"/>
    <property type="project" value="InterPro"/>
</dbReference>
<dbReference type="GO" id="GO:0031721">
    <property type="term" value="F:hemoglobin alpha binding"/>
    <property type="evidence" value="ECO:0007669"/>
    <property type="project" value="TreeGrafter"/>
</dbReference>
<dbReference type="GO" id="GO:0046872">
    <property type="term" value="F:metal ion binding"/>
    <property type="evidence" value="ECO:0007669"/>
    <property type="project" value="UniProtKB-KW"/>
</dbReference>
<dbReference type="GO" id="GO:0043177">
    <property type="term" value="F:organic acid binding"/>
    <property type="evidence" value="ECO:0007669"/>
    <property type="project" value="TreeGrafter"/>
</dbReference>
<dbReference type="GO" id="GO:0019825">
    <property type="term" value="F:oxygen binding"/>
    <property type="evidence" value="ECO:0007669"/>
    <property type="project" value="InterPro"/>
</dbReference>
<dbReference type="GO" id="GO:0005344">
    <property type="term" value="F:oxygen carrier activity"/>
    <property type="evidence" value="ECO:0007669"/>
    <property type="project" value="UniProtKB-KW"/>
</dbReference>
<dbReference type="GO" id="GO:0004601">
    <property type="term" value="F:peroxidase activity"/>
    <property type="evidence" value="ECO:0007669"/>
    <property type="project" value="TreeGrafter"/>
</dbReference>
<dbReference type="GO" id="GO:0042744">
    <property type="term" value="P:hydrogen peroxide catabolic process"/>
    <property type="evidence" value="ECO:0007669"/>
    <property type="project" value="TreeGrafter"/>
</dbReference>
<dbReference type="CDD" id="cd08925">
    <property type="entry name" value="Hb-beta-like"/>
    <property type="match status" value="1"/>
</dbReference>
<dbReference type="FunFam" id="1.10.490.10:FF:000001">
    <property type="entry name" value="Hemoglobin subunit beta"/>
    <property type="match status" value="1"/>
</dbReference>
<dbReference type="Gene3D" id="1.10.490.10">
    <property type="entry name" value="Globins"/>
    <property type="match status" value="1"/>
</dbReference>
<dbReference type="InterPro" id="IPR000971">
    <property type="entry name" value="Globin"/>
</dbReference>
<dbReference type="InterPro" id="IPR009050">
    <property type="entry name" value="Globin-like_sf"/>
</dbReference>
<dbReference type="InterPro" id="IPR012292">
    <property type="entry name" value="Globin/Proto"/>
</dbReference>
<dbReference type="InterPro" id="IPR002337">
    <property type="entry name" value="Hemoglobin_b"/>
</dbReference>
<dbReference type="InterPro" id="IPR050056">
    <property type="entry name" value="Hemoglobin_oxygen_transport"/>
</dbReference>
<dbReference type="PANTHER" id="PTHR11442">
    <property type="entry name" value="HEMOGLOBIN FAMILY MEMBER"/>
    <property type="match status" value="1"/>
</dbReference>
<dbReference type="PANTHER" id="PTHR11442:SF7">
    <property type="entry name" value="HEMOGLOBIN SUBUNIT EPSILON"/>
    <property type="match status" value="1"/>
</dbReference>
<dbReference type="Pfam" id="PF00042">
    <property type="entry name" value="Globin"/>
    <property type="match status" value="1"/>
</dbReference>
<dbReference type="PRINTS" id="PR00814">
    <property type="entry name" value="BETAHAEM"/>
</dbReference>
<dbReference type="SUPFAM" id="SSF46458">
    <property type="entry name" value="Globin-like"/>
    <property type="match status" value="1"/>
</dbReference>
<dbReference type="PROSITE" id="PS01033">
    <property type="entry name" value="GLOBIN"/>
    <property type="match status" value="1"/>
</dbReference>